<gene>
    <name evidence="1" type="primary">htpG</name>
    <name type="ordered locus">MUL_2744</name>
</gene>
<accession>A0PRT4</accession>
<comment type="function">
    <text evidence="1">Molecular chaperone. Has ATPase activity.</text>
</comment>
<comment type="subunit">
    <text evidence="1">Homodimer.</text>
</comment>
<comment type="subcellular location">
    <subcellularLocation>
        <location evidence="1">Cytoplasm</location>
    </subcellularLocation>
</comment>
<comment type="similarity">
    <text evidence="1">Belongs to the heat shock protein 90 family.</text>
</comment>
<proteinExistence type="inferred from homology"/>
<keyword id="KW-0067">ATP-binding</keyword>
<keyword id="KW-0143">Chaperone</keyword>
<keyword id="KW-0963">Cytoplasm</keyword>
<keyword id="KW-0547">Nucleotide-binding</keyword>
<keyword id="KW-0346">Stress response</keyword>
<dbReference type="EMBL" id="CP000325">
    <property type="protein sequence ID" value="ABL05053.1"/>
    <property type="molecule type" value="Genomic_DNA"/>
</dbReference>
<dbReference type="RefSeq" id="WP_011740667.1">
    <property type="nucleotide sequence ID" value="NC_008611.1"/>
</dbReference>
<dbReference type="SMR" id="A0PRT4"/>
<dbReference type="KEGG" id="mul:MUL_2744"/>
<dbReference type="eggNOG" id="COG0326">
    <property type="taxonomic scope" value="Bacteria"/>
</dbReference>
<dbReference type="HOGENOM" id="CLU_006684_3_0_11"/>
<dbReference type="Proteomes" id="UP000000765">
    <property type="component" value="Chromosome"/>
</dbReference>
<dbReference type="GO" id="GO:0005737">
    <property type="term" value="C:cytoplasm"/>
    <property type="evidence" value="ECO:0007669"/>
    <property type="project" value="UniProtKB-SubCell"/>
</dbReference>
<dbReference type="GO" id="GO:0005524">
    <property type="term" value="F:ATP binding"/>
    <property type="evidence" value="ECO:0007669"/>
    <property type="project" value="UniProtKB-UniRule"/>
</dbReference>
<dbReference type="GO" id="GO:0016887">
    <property type="term" value="F:ATP hydrolysis activity"/>
    <property type="evidence" value="ECO:0007669"/>
    <property type="project" value="InterPro"/>
</dbReference>
<dbReference type="GO" id="GO:0140662">
    <property type="term" value="F:ATP-dependent protein folding chaperone"/>
    <property type="evidence" value="ECO:0007669"/>
    <property type="project" value="InterPro"/>
</dbReference>
<dbReference type="GO" id="GO:0051082">
    <property type="term" value="F:unfolded protein binding"/>
    <property type="evidence" value="ECO:0007669"/>
    <property type="project" value="UniProtKB-UniRule"/>
</dbReference>
<dbReference type="CDD" id="cd16927">
    <property type="entry name" value="HATPase_Hsp90-like"/>
    <property type="match status" value="1"/>
</dbReference>
<dbReference type="FunFam" id="1.20.120.790:FF:000006">
    <property type="entry name" value="Chaperone protein HtpG"/>
    <property type="match status" value="1"/>
</dbReference>
<dbReference type="FunFam" id="3.30.230.80:FF:000002">
    <property type="entry name" value="Molecular chaperone HtpG"/>
    <property type="match status" value="1"/>
</dbReference>
<dbReference type="FunFam" id="3.30.565.10:FF:000009">
    <property type="entry name" value="Molecular chaperone HtpG"/>
    <property type="match status" value="1"/>
</dbReference>
<dbReference type="Gene3D" id="3.30.230.80">
    <property type="match status" value="1"/>
</dbReference>
<dbReference type="Gene3D" id="3.40.50.11260">
    <property type="match status" value="1"/>
</dbReference>
<dbReference type="Gene3D" id="1.20.120.790">
    <property type="entry name" value="Heat shock protein 90, C-terminal domain"/>
    <property type="match status" value="1"/>
</dbReference>
<dbReference type="Gene3D" id="3.30.565.10">
    <property type="entry name" value="Histidine kinase-like ATPase, C-terminal domain"/>
    <property type="match status" value="1"/>
</dbReference>
<dbReference type="HAMAP" id="MF_00505">
    <property type="entry name" value="HSP90"/>
    <property type="match status" value="1"/>
</dbReference>
<dbReference type="InterPro" id="IPR036890">
    <property type="entry name" value="HATPase_C_sf"/>
</dbReference>
<dbReference type="InterPro" id="IPR037196">
    <property type="entry name" value="HSP90_C"/>
</dbReference>
<dbReference type="InterPro" id="IPR001404">
    <property type="entry name" value="Hsp90_fam"/>
</dbReference>
<dbReference type="InterPro" id="IPR020575">
    <property type="entry name" value="Hsp90_N"/>
</dbReference>
<dbReference type="InterPro" id="IPR020568">
    <property type="entry name" value="Ribosomal_Su5_D2-typ_SF"/>
</dbReference>
<dbReference type="NCBIfam" id="NF003555">
    <property type="entry name" value="PRK05218.1"/>
    <property type="match status" value="1"/>
</dbReference>
<dbReference type="PANTHER" id="PTHR11528">
    <property type="entry name" value="HEAT SHOCK PROTEIN 90 FAMILY MEMBER"/>
    <property type="match status" value="1"/>
</dbReference>
<dbReference type="Pfam" id="PF13589">
    <property type="entry name" value="HATPase_c_3"/>
    <property type="match status" value="1"/>
</dbReference>
<dbReference type="Pfam" id="PF00183">
    <property type="entry name" value="HSP90"/>
    <property type="match status" value="1"/>
</dbReference>
<dbReference type="PIRSF" id="PIRSF002583">
    <property type="entry name" value="Hsp90"/>
    <property type="match status" value="1"/>
</dbReference>
<dbReference type="PRINTS" id="PR00775">
    <property type="entry name" value="HEATSHOCK90"/>
</dbReference>
<dbReference type="SMART" id="SM00387">
    <property type="entry name" value="HATPase_c"/>
    <property type="match status" value="1"/>
</dbReference>
<dbReference type="SUPFAM" id="SSF55874">
    <property type="entry name" value="ATPase domain of HSP90 chaperone/DNA topoisomerase II/histidine kinase"/>
    <property type="match status" value="1"/>
</dbReference>
<dbReference type="SUPFAM" id="SSF110942">
    <property type="entry name" value="HSP90 C-terminal domain"/>
    <property type="match status" value="1"/>
</dbReference>
<dbReference type="SUPFAM" id="SSF54211">
    <property type="entry name" value="Ribosomal protein S5 domain 2-like"/>
    <property type="match status" value="1"/>
</dbReference>
<sequence length="648" mass="72942">MNARVEQLEFQAEARQLLDLMIHSVYSNKDSFLRELISNASDALDKLRIEAFRNKDLEVDTSDLHIETEADKGARTLTVRDNGIGMTRAEVVDLIGTLAKSGTAELRAQLREAKNDAASEELIGQFGIGFYSSFMVADKVELLTRKAGESEATKWESSGEGTYTIESVEGAPQGTSVTLHLKPEDAEDELYDYTADWKLRHLIKKYSDFIAWPIRMEVEKRVPAPHEEGEEPGEETVVLETETLNSMKALWARPKDEVSADEYNEFYKHIAHAWDDPMEVIAMKAEGTFEYQALLFIPSHAQHDLFNRDAVFGIQLYVKRVFIMGDCDQLMPEYLRFVKGVVDAQDMSLNVSREILQQDRQIKAIRRRLTKKVLSTIKDLQSERPEDYRTFWTQFGKVVKEGLLADFDNRETLLEISSFASTHSEEEPTTLAGYVERMKEDQTQIFFATGDSRQQILKSPHLEAFRAKGYEVLLLTEPVDEVWVGVVNEFDGKPLQSVAKGEVDLDSDGEGSEAEREEQQKEFADLLGWLKETLGEQVKEVRLSTRLTESPACLITDTFGITPALARIYRATGQDVPVGKRTLELNPTHPLVIGLRQAQASADDDAKKEAVSETAELLYGTALLAEGGAPDDPARFAELLADRLTRTL</sequence>
<evidence type="ECO:0000255" key="1">
    <source>
        <dbReference type="HAMAP-Rule" id="MF_00505"/>
    </source>
</evidence>
<protein>
    <recommendedName>
        <fullName evidence="1">Chaperone protein HtpG</fullName>
    </recommendedName>
    <alternativeName>
        <fullName evidence="1">Heat shock protein HtpG</fullName>
    </alternativeName>
    <alternativeName>
        <fullName evidence="1">High temperature protein G</fullName>
    </alternativeName>
</protein>
<name>HTPG_MYCUA</name>
<reference key="1">
    <citation type="journal article" date="2007" name="Genome Res.">
        <title>Reductive evolution and niche adaptation inferred from the genome of Mycobacterium ulcerans, the causative agent of Buruli ulcer.</title>
        <authorList>
            <person name="Stinear T.P."/>
            <person name="Seemann T."/>
            <person name="Pidot S."/>
            <person name="Frigui W."/>
            <person name="Reysset G."/>
            <person name="Garnier T."/>
            <person name="Meurice G."/>
            <person name="Simon D."/>
            <person name="Bouchier C."/>
            <person name="Ma L."/>
            <person name="Tichit M."/>
            <person name="Porter J.L."/>
            <person name="Ryan J."/>
            <person name="Johnson P.D.R."/>
            <person name="Davies J.K."/>
            <person name="Jenkin G.A."/>
            <person name="Small P.L.C."/>
            <person name="Jones L.M."/>
            <person name="Tekaia F."/>
            <person name="Laval F."/>
            <person name="Daffe M."/>
            <person name="Parkhill J."/>
            <person name="Cole S.T."/>
        </authorList>
    </citation>
    <scope>NUCLEOTIDE SEQUENCE [LARGE SCALE GENOMIC DNA]</scope>
    <source>
        <strain>Agy99</strain>
    </source>
</reference>
<feature type="chain" id="PRO_1000014933" description="Chaperone protein HtpG">
    <location>
        <begin position="1"/>
        <end position="648"/>
    </location>
</feature>
<feature type="region of interest" description="A; substrate-binding" evidence="1">
    <location>
        <begin position="1"/>
        <end position="353"/>
    </location>
</feature>
<feature type="region of interest" description="B" evidence="1">
    <location>
        <begin position="354"/>
        <end position="567"/>
    </location>
</feature>
<feature type="region of interest" description="C" evidence="1">
    <location>
        <begin position="568"/>
        <end position="648"/>
    </location>
</feature>
<organism>
    <name type="scientific">Mycobacterium ulcerans (strain Agy99)</name>
    <dbReference type="NCBI Taxonomy" id="362242"/>
    <lineage>
        <taxon>Bacteria</taxon>
        <taxon>Bacillati</taxon>
        <taxon>Actinomycetota</taxon>
        <taxon>Actinomycetes</taxon>
        <taxon>Mycobacteriales</taxon>
        <taxon>Mycobacteriaceae</taxon>
        <taxon>Mycobacterium</taxon>
        <taxon>Mycobacterium ulcerans group</taxon>
    </lineage>
</organism>